<gene>
    <name type="primary">vif</name>
</gene>
<organismHost>
    <name type="scientific">Homo sapiens</name>
    <name type="common">Human</name>
    <dbReference type="NCBI Taxonomy" id="9606"/>
</organismHost>
<name>VIF_HV2RO</name>
<accession>P04595</accession>
<proteinExistence type="evidence at transcript level"/>
<dbReference type="EMBL" id="M15390">
    <property type="protein sequence ID" value="AAB00765.1"/>
    <property type="molecule type" value="Genomic_DNA"/>
</dbReference>
<dbReference type="EMBL" id="X05291">
    <property type="protein sequence ID" value="CAA28910.1"/>
    <property type="molecule type" value="Genomic_RNA"/>
</dbReference>
<dbReference type="PIR" id="G26262">
    <property type="entry name" value="ASLJS2"/>
</dbReference>
<dbReference type="SMR" id="P04595"/>
<dbReference type="Proteomes" id="UP000007426">
    <property type="component" value="Genome"/>
</dbReference>
<dbReference type="Proteomes" id="UP000246871">
    <property type="component" value="Segment"/>
</dbReference>
<dbReference type="GO" id="GO:0030430">
    <property type="term" value="C:host cell cytoplasm"/>
    <property type="evidence" value="ECO:0007669"/>
    <property type="project" value="UniProtKB-SubCell"/>
</dbReference>
<dbReference type="GO" id="GO:0020002">
    <property type="term" value="C:host cell plasma membrane"/>
    <property type="evidence" value="ECO:0007669"/>
    <property type="project" value="UniProtKB-SubCell"/>
</dbReference>
<dbReference type="GO" id="GO:0016020">
    <property type="term" value="C:membrane"/>
    <property type="evidence" value="ECO:0007669"/>
    <property type="project" value="UniProtKB-KW"/>
</dbReference>
<dbReference type="GO" id="GO:0044423">
    <property type="term" value="C:virion component"/>
    <property type="evidence" value="ECO:0007669"/>
    <property type="project" value="UniProtKB-KW"/>
</dbReference>
<dbReference type="GO" id="GO:0019058">
    <property type="term" value="P:viral life cycle"/>
    <property type="evidence" value="ECO:0007669"/>
    <property type="project" value="InterPro"/>
</dbReference>
<dbReference type="InterPro" id="IPR000475">
    <property type="entry name" value="Vif"/>
</dbReference>
<dbReference type="Pfam" id="PF00559">
    <property type="entry name" value="Vif"/>
    <property type="match status" value="1"/>
</dbReference>
<dbReference type="PRINTS" id="PR00349">
    <property type="entry name" value="VIRIONINFFCT"/>
</dbReference>
<sequence length="215" mass="25512">MEEDKRWIVVPTWRVPGRMEKWHSLVKYLKYKTKDLEKVCYVPHHKVGWAWWTCSRVIFPLKGNSHLEIQAYWNLTPEKGWLSSYSVRITWYTEKFWTDVTPDCADVLIHSTYFPCFTAGEVRRAIRGEKLLSCCNYPRAHRAQVPSLQFLALVVVQQNDRPQRDSTTRKQRRRDYRRGLRLAKQDSRSHKQRSSESPTPRTYFPGVAEVLEILA</sequence>
<organism>
    <name type="scientific">Human immunodeficiency virus type 2 subtype A (isolate ROD)</name>
    <name type="common">HIV-2</name>
    <dbReference type="NCBI Taxonomy" id="11720"/>
    <lineage>
        <taxon>Viruses</taxon>
        <taxon>Riboviria</taxon>
        <taxon>Pararnavirae</taxon>
        <taxon>Artverviricota</taxon>
        <taxon>Revtraviricetes</taxon>
        <taxon>Ortervirales</taxon>
        <taxon>Retroviridae</taxon>
        <taxon>Orthoretrovirinae</taxon>
        <taxon>Lentivirus</taxon>
        <taxon>Human immunodeficiency virus 2</taxon>
    </lineage>
</organism>
<comment type="function">
    <text evidence="1">Counteracts the innate antiviral activity of APOBEC3G. Forms a complex with host APOBEC3G thus preventing the entry of this lethally hypermutating enzyme into progeny virions. Functions as an adapter molecule, recruiting APOBEC3G to the ubiquitin-proteasome machinery. Targets APOBEC3G for degradation through the assembly with elongin BC complex, CUL5 and RBX1. Binds viral RNA and affects the stability of viral nucleoprotein core. May play a role in viral morphology (By similarity).</text>
</comment>
<comment type="subunit">
    <text evidence="1">Homomultimer; in vitro and presumably in vivo. Interacts with viral Pr55Gag precursor and human APOBEC3G. The interaction between Vif and APOBEC3G is species-specific, which may play a role in restricting the replication of HIV to humans. Forms an E3 ligase complex by interacting with human CUL5 and elongin BC complex (ELOB and ELOC) (By similarity).</text>
</comment>
<comment type="subcellular location">
    <subcellularLocation>
        <location evidence="1">Host cytoplasm</location>
    </subcellularLocation>
    <subcellularLocation>
        <location evidence="1">Host cell membrane</location>
        <topology evidence="1">Peripheral membrane protein</topology>
        <orientation evidence="1">Cytoplasmic side</orientation>
    </subcellularLocation>
    <subcellularLocation>
        <location evidence="1">Virion</location>
    </subcellularLocation>
    <text evidence="1">In the cytoplasm, seems to colocalize with intermediate filament vimentin. A fraction is associated with the cytoplasmic side of cellular membranes, presumably via the interaction with Pr55Gag precursor (By similarity).</text>
</comment>
<comment type="induction">
    <text>Expressed late during infection in a Rev-dependent manner.</text>
</comment>
<comment type="domain">
    <text evidence="1">The BC-like-box motif mediates the interaction with elongin BC complex.</text>
</comment>
<comment type="domain">
    <text evidence="1">The HCCH motif (H-x(5)-C-x(18)-C-x(5)-H) mediates the interaction with CUL5.</text>
</comment>
<comment type="PTM">
    <text evidence="1">Processed in virion by the viral protease.</text>
</comment>
<comment type="PTM">
    <text evidence="1">Highly phosphorylated on serine and threonine residues.</text>
</comment>
<comment type="PTM">
    <text evidence="1">Polyubiquitinated and degraded by the proteasome in the presence of APOBEC3G.</text>
</comment>
<comment type="miscellaneous">
    <text>Required for replication in 'nonpermissive' cells, including primary T-cells, macrophages and certain T-cell lines, but is dispensable for replication in 'permissive' cell lines, such as 293T cells. In nonpermissive cells, Vif-defective viruses can produce virions, but they fail to complete reverse transcription and cannot successfully infect new cells.</text>
</comment>
<comment type="miscellaneous">
    <text>Vif-defective viruses show catastrophic failure in reverse transcription due to APOBEC-induced mutations that initiate a DNA base repair pathway and compromise the structural integrity of the ssDNA. In the absence of Vif, the virion is morphologically abnormal.</text>
</comment>
<comment type="similarity">
    <text evidence="3">Belongs to the primate lentivirus group Vif protein family.</text>
</comment>
<evidence type="ECO:0000250" key="1"/>
<evidence type="ECO:0000256" key="2">
    <source>
        <dbReference type="SAM" id="MobiDB-lite"/>
    </source>
</evidence>
<evidence type="ECO:0000305" key="3"/>
<feature type="chain" id="PRO_0000085324" description="Virion infectivity factor">
    <location>
        <begin position="1"/>
        <end position="215"/>
    </location>
</feature>
<feature type="region of interest" description="Multimerization" evidence="1">
    <location>
        <begin position="154"/>
        <end position="167"/>
    </location>
</feature>
<feature type="region of interest" description="Disordered" evidence="2">
    <location>
        <begin position="161"/>
        <end position="203"/>
    </location>
</feature>
<feature type="short sequence motif" description="HCCH motif" evidence="1">
    <location>
        <begin position="110"/>
        <end position="141"/>
    </location>
</feature>
<feature type="short sequence motif" description="BC-box-like motif" evidence="1">
    <location>
        <begin position="147"/>
        <end position="156"/>
    </location>
</feature>
<feature type="compositionally biased region" description="Basic residues" evidence="2">
    <location>
        <begin position="169"/>
        <end position="181"/>
    </location>
</feature>
<feature type="modified residue" description="Phosphothreonine; by host MAP4K1" evidence="1">
    <location>
        <position position="98"/>
    </location>
</feature>
<feature type="modified residue" description="Phosphoserine; by host" evidence="1">
    <location>
        <position position="147"/>
    </location>
</feature>
<reference key="1">
    <citation type="journal article" date="1987" name="Nature">
        <title>Genome organization and transactivation of the human immunodeficiency virus type 2.</title>
        <authorList>
            <person name="Guyader M."/>
            <person name="Emerman M."/>
            <person name="Sonigo P."/>
            <person name="Clavel F."/>
            <person name="Montagnier L."/>
            <person name="Alizon M."/>
        </authorList>
    </citation>
    <scope>NUCLEOTIDE SEQUENCE [GENOMIC DNA]</scope>
</reference>
<protein>
    <recommendedName>
        <fullName>Virion infectivity factor</fullName>
        <shortName>Vif</shortName>
    </recommendedName>
    <alternativeName>
        <fullName>Q protein</fullName>
    </alternativeName>
    <alternativeName>
        <fullName>SOR protein</fullName>
    </alternativeName>
</protein>
<keyword id="KW-0014">AIDS</keyword>
<keyword id="KW-1032">Host cell membrane</keyword>
<keyword id="KW-1035">Host cytoplasm</keyword>
<keyword id="KW-1043">Host membrane</keyword>
<keyword id="KW-0945">Host-virus interaction</keyword>
<keyword id="KW-0472">Membrane</keyword>
<keyword id="KW-0597">Phosphoprotein</keyword>
<keyword id="KW-0832">Ubl conjugation</keyword>
<keyword id="KW-0833">Ubl conjugation pathway</keyword>
<keyword id="KW-0946">Virion</keyword>